<reference key="1">
    <citation type="submission" date="2008-02" db="EMBL/GenBank/DDBJ databases">
        <title>Complete sequence of Synechococcus sp. PCC 7002.</title>
        <authorList>
            <person name="Li T."/>
            <person name="Zhao J."/>
            <person name="Zhao C."/>
            <person name="Liu Z."/>
            <person name="Zhao F."/>
            <person name="Marquardt J."/>
            <person name="Nomura C.T."/>
            <person name="Persson S."/>
            <person name="Detter J.C."/>
            <person name="Richardson P.M."/>
            <person name="Lanz C."/>
            <person name="Schuster S.C."/>
            <person name="Wang J."/>
            <person name="Li S."/>
            <person name="Huang X."/>
            <person name="Cai T."/>
            <person name="Yu Z."/>
            <person name="Luo J."/>
            <person name="Zhao J."/>
            <person name="Bryant D.A."/>
        </authorList>
    </citation>
    <scope>NUCLEOTIDE SEQUENCE [LARGE SCALE GENOMIC DNA]</scope>
    <source>
        <strain>ATCC 27264 / PCC 7002 / PR-6</strain>
    </source>
</reference>
<comment type="function">
    <text evidence="1">With S4 and S12 plays an important role in translational accuracy.</text>
</comment>
<comment type="function">
    <text evidence="1">Located at the back of the 30S subunit body where it stabilizes the conformation of the head with respect to the body.</text>
</comment>
<comment type="subunit">
    <text evidence="1">Part of the 30S ribosomal subunit. Contacts proteins S4 and S8.</text>
</comment>
<comment type="domain">
    <text>The N-terminal domain interacts with the head of the 30S subunit; the C-terminal domain interacts with the body and contacts protein S4. The interaction surface between S4 and S5 is involved in control of translational fidelity.</text>
</comment>
<comment type="similarity">
    <text evidence="1">Belongs to the universal ribosomal protein uS5 family.</text>
</comment>
<organism>
    <name type="scientific">Picosynechococcus sp. (strain ATCC 27264 / PCC 7002 / PR-6)</name>
    <name type="common">Agmenellum quadruplicatum</name>
    <dbReference type="NCBI Taxonomy" id="32049"/>
    <lineage>
        <taxon>Bacteria</taxon>
        <taxon>Bacillati</taxon>
        <taxon>Cyanobacteriota</taxon>
        <taxon>Cyanophyceae</taxon>
        <taxon>Oscillatoriophycideae</taxon>
        <taxon>Chroococcales</taxon>
        <taxon>Geminocystaceae</taxon>
        <taxon>Picosynechococcus</taxon>
    </lineage>
</organism>
<evidence type="ECO:0000255" key="1">
    <source>
        <dbReference type="HAMAP-Rule" id="MF_01307"/>
    </source>
</evidence>
<evidence type="ECO:0000305" key="2"/>
<sequence length="173" mass="18190">MAKRRKSSKNKEKETNWQERVIQIRRVSKVVKGGKKLSFRAIVVIGNETGKVGVGVGKAGDVIGAVRKGVSDAKKHVVDVPLTKTNTITHRINGVAGGAKVMMRPAAPGTGVIAGGAVRTVLELAGVKNILAKQLGSSSPLNNARATVDALGNLRSFSSVAQERGVSIERIYA</sequence>
<gene>
    <name evidence="1" type="primary">rpsE</name>
    <name evidence="1" type="synonym">rps5</name>
    <name type="ordered locus">SYNPCC7002_A1049</name>
</gene>
<dbReference type="EMBL" id="CP000951">
    <property type="protein sequence ID" value="ACA99051.1"/>
    <property type="molecule type" value="Genomic_DNA"/>
</dbReference>
<dbReference type="RefSeq" id="WP_012306674.1">
    <property type="nucleotide sequence ID" value="NZ_JAHHPU010000001.1"/>
</dbReference>
<dbReference type="SMR" id="B1XJJ1"/>
<dbReference type="STRING" id="32049.SYNPCC7002_A1049"/>
<dbReference type="KEGG" id="syp:SYNPCC7002_A1049"/>
<dbReference type="eggNOG" id="COG0098">
    <property type="taxonomic scope" value="Bacteria"/>
</dbReference>
<dbReference type="HOGENOM" id="CLU_065898_2_2_3"/>
<dbReference type="Proteomes" id="UP000001688">
    <property type="component" value="Chromosome"/>
</dbReference>
<dbReference type="GO" id="GO:0015935">
    <property type="term" value="C:small ribosomal subunit"/>
    <property type="evidence" value="ECO:0007669"/>
    <property type="project" value="InterPro"/>
</dbReference>
<dbReference type="GO" id="GO:0019843">
    <property type="term" value="F:rRNA binding"/>
    <property type="evidence" value="ECO:0007669"/>
    <property type="project" value="UniProtKB-UniRule"/>
</dbReference>
<dbReference type="GO" id="GO:0003735">
    <property type="term" value="F:structural constituent of ribosome"/>
    <property type="evidence" value="ECO:0007669"/>
    <property type="project" value="InterPro"/>
</dbReference>
<dbReference type="GO" id="GO:0006412">
    <property type="term" value="P:translation"/>
    <property type="evidence" value="ECO:0007669"/>
    <property type="project" value="UniProtKB-UniRule"/>
</dbReference>
<dbReference type="FunFam" id="3.30.230.10:FF:000002">
    <property type="entry name" value="30S ribosomal protein S5"/>
    <property type="match status" value="1"/>
</dbReference>
<dbReference type="Gene3D" id="3.30.160.20">
    <property type="match status" value="1"/>
</dbReference>
<dbReference type="Gene3D" id="3.30.230.10">
    <property type="match status" value="1"/>
</dbReference>
<dbReference type="HAMAP" id="MF_01307_B">
    <property type="entry name" value="Ribosomal_uS5_B"/>
    <property type="match status" value="1"/>
</dbReference>
<dbReference type="InterPro" id="IPR020568">
    <property type="entry name" value="Ribosomal_Su5_D2-typ_SF"/>
</dbReference>
<dbReference type="InterPro" id="IPR000851">
    <property type="entry name" value="Ribosomal_uS5"/>
</dbReference>
<dbReference type="InterPro" id="IPR005712">
    <property type="entry name" value="Ribosomal_uS5_bac-type"/>
</dbReference>
<dbReference type="InterPro" id="IPR005324">
    <property type="entry name" value="Ribosomal_uS5_C"/>
</dbReference>
<dbReference type="InterPro" id="IPR013810">
    <property type="entry name" value="Ribosomal_uS5_N"/>
</dbReference>
<dbReference type="InterPro" id="IPR018192">
    <property type="entry name" value="Ribosomal_uS5_N_CS"/>
</dbReference>
<dbReference type="InterPro" id="IPR014721">
    <property type="entry name" value="Ribsml_uS5_D2-typ_fold_subgr"/>
</dbReference>
<dbReference type="NCBIfam" id="TIGR01021">
    <property type="entry name" value="rpsE_bact"/>
    <property type="match status" value="1"/>
</dbReference>
<dbReference type="PANTHER" id="PTHR48277">
    <property type="entry name" value="MITOCHONDRIAL RIBOSOMAL PROTEIN S5"/>
    <property type="match status" value="1"/>
</dbReference>
<dbReference type="PANTHER" id="PTHR48277:SF1">
    <property type="entry name" value="MITOCHONDRIAL RIBOSOMAL PROTEIN S5"/>
    <property type="match status" value="1"/>
</dbReference>
<dbReference type="Pfam" id="PF00333">
    <property type="entry name" value="Ribosomal_S5"/>
    <property type="match status" value="1"/>
</dbReference>
<dbReference type="Pfam" id="PF03719">
    <property type="entry name" value="Ribosomal_S5_C"/>
    <property type="match status" value="1"/>
</dbReference>
<dbReference type="SUPFAM" id="SSF54768">
    <property type="entry name" value="dsRNA-binding domain-like"/>
    <property type="match status" value="1"/>
</dbReference>
<dbReference type="SUPFAM" id="SSF54211">
    <property type="entry name" value="Ribosomal protein S5 domain 2-like"/>
    <property type="match status" value="1"/>
</dbReference>
<dbReference type="PROSITE" id="PS00585">
    <property type="entry name" value="RIBOSOMAL_S5"/>
    <property type="match status" value="1"/>
</dbReference>
<dbReference type="PROSITE" id="PS50881">
    <property type="entry name" value="S5_DSRBD"/>
    <property type="match status" value="1"/>
</dbReference>
<name>RS5_PICP2</name>
<proteinExistence type="inferred from homology"/>
<keyword id="KW-1185">Reference proteome</keyword>
<keyword id="KW-0687">Ribonucleoprotein</keyword>
<keyword id="KW-0689">Ribosomal protein</keyword>
<keyword id="KW-0694">RNA-binding</keyword>
<keyword id="KW-0699">rRNA-binding</keyword>
<feature type="chain" id="PRO_1000140897" description="Small ribosomal subunit protein uS5">
    <location>
        <begin position="1"/>
        <end position="173"/>
    </location>
</feature>
<feature type="domain" description="S5 DRBM" evidence="1">
    <location>
        <begin position="17"/>
        <end position="80"/>
    </location>
</feature>
<accession>B1XJJ1</accession>
<protein>
    <recommendedName>
        <fullName evidence="1">Small ribosomal subunit protein uS5</fullName>
    </recommendedName>
    <alternativeName>
        <fullName evidence="2">30S ribosomal protein S5</fullName>
    </alternativeName>
</protein>